<feature type="chain" id="PRO_1000011133" description="Phosphopantetheine adenylyltransferase">
    <location>
        <begin position="1"/>
        <end position="159"/>
    </location>
</feature>
<feature type="binding site" evidence="1">
    <location>
        <position position="16"/>
    </location>
    <ligand>
        <name>ATP</name>
        <dbReference type="ChEBI" id="CHEBI:30616"/>
    </ligand>
</feature>
<feature type="binding site" evidence="1">
    <location>
        <position position="40"/>
    </location>
    <ligand>
        <name>substrate</name>
    </ligand>
</feature>
<feature type="binding site" evidence="1">
    <location>
        <position position="72"/>
    </location>
    <ligand>
        <name>substrate</name>
    </ligand>
</feature>
<feature type="binding site" evidence="1">
    <location>
        <position position="86"/>
    </location>
    <ligand>
        <name>substrate</name>
    </ligand>
</feature>
<feature type="binding site" evidence="1">
    <location>
        <begin position="87"/>
        <end position="89"/>
    </location>
    <ligand>
        <name>ATP</name>
        <dbReference type="ChEBI" id="CHEBI:30616"/>
    </ligand>
</feature>
<feature type="binding site" evidence="1">
    <location>
        <position position="97"/>
    </location>
    <ligand>
        <name>ATP</name>
        <dbReference type="ChEBI" id="CHEBI:30616"/>
    </ligand>
</feature>
<feature type="binding site" evidence="1">
    <location>
        <begin position="122"/>
        <end position="128"/>
    </location>
    <ligand>
        <name>ATP</name>
        <dbReference type="ChEBI" id="CHEBI:30616"/>
    </ligand>
</feature>
<feature type="site" description="Transition state stabilizer" evidence="1">
    <location>
        <position position="16"/>
    </location>
</feature>
<accession>Q3ZA11</accession>
<proteinExistence type="inferred from homology"/>
<reference key="1">
    <citation type="journal article" date="2005" name="Science">
        <title>Genome sequence of the PCE-dechlorinating bacterium Dehalococcoides ethenogenes.</title>
        <authorList>
            <person name="Seshadri R."/>
            <person name="Adrian L."/>
            <person name="Fouts D.E."/>
            <person name="Eisen J.A."/>
            <person name="Phillippy A.M."/>
            <person name="Methe B.A."/>
            <person name="Ward N.L."/>
            <person name="Nelson W.C."/>
            <person name="DeBoy R.T."/>
            <person name="Khouri H.M."/>
            <person name="Kolonay J.F."/>
            <person name="Dodson R.J."/>
            <person name="Daugherty S.C."/>
            <person name="Brinkac L.M."/>
            <person name="Sullivan S.A."/>
            <person name="Madupu R."/>
            <person name="Nelson K.E."/>
            <person name="Kang K.H."/>
            <person name="Impraim M."/>
            <person name="Tran K."/>
            <person name="Robinson J.M."/>
            <person name="Forberger H.A."/>
            <person name="Fraser C.M."/>
            <person name="Zinder S.H."/>
            <person name="Heidelberg J.F."/>
        </authorList>
    </citation>
    <scope>NUCLEOTIDE SEQUENCE [LARGE SCALE GENOMIC DNA]</scope>
    <source>
        <strain>ATCC BAA-2266 / KCTC 15142 / 195</strain>
    </source>
</reference>
<keyword id="KW-0067">ATP-binding</keyword>
<keyword id="KW-0173">Coenzyme A biosynthesis</keyword>
<keyword id="KW-0963">Cytoplasm</keyword>
<keyword id="KW-0460">Magnesium</keyword>
<keyword id="KW-0547">Nucleotide-binding</keyword>
<keyword id="KW-0548">Nucleotidyltransferase</keyword>
<keyword id="KW-0808">Transferase</keyword>
<dbReference type="EC" id="2.7.7.3" evidence="1"/>
<dbReference type="EMBL" id="CP000027">
    <property type="protein sequence ID" value="AAW40559.1"/>
    <property type="molecule type" value="Genomic_DNA"/>
</dbReference>
<dbReference type="RefSeq" id="WP_010935993.1">
    <property type="nucleotide sequence ID" value="NC_002936.3"/>
</dbReference>
<dbReference type="SMR" id="Q3ZA11"/>
<dbReference type="FunCoup" id="Q3ZA11">
    <property type="interactions" value="310"/>
</dbReference>
<dbReference type="STRING" id="243164.DET0190"/>
<dbReference type="GeneID" id="3230524"/>
<dbReference type="KEGG" id="det:DET0190"/>
<dbReference type="eggNOG" id="COG0669">
    <property type="taxonomic scope" value="Bacteria"/>
</dbReference>
<dbReference type="HOGENOM" id="CLU_100149_1_1_0"/>
<dbReference type="InParanoid" id="Q3ZA11"/>
<dbReference type="UniPathway" id="UPA00241">
    <property type="reaction ID" value="UER00355"/>
</dbReference>
<dbReference type="Proteomes" id="UP000008289">
    <property type="component" value="Chromosome"/>
</dbReference>
<dbReference type="GO" id="GO:0005737">
    <property type="term" value="C:cytoplasm"/>
    <property type="evidence" value="ECO:0007669"/>
    <property type="project" value="UniProtKB-SubCell"/>
</dbReference>
<dbReference type="GO" id="GO:0005524">
    <property type="term" value="F:ATP binding"/>
    <property type="evidence" value="ECO:0007669"/>
    <property type="project" value="UniProtKB-KW"/>
</dbReference>
<dbReference type="GO" id="GO:0004595">
    <property type="term" value="F:pantetheine-phosphate adenylyltransferase activity"/>
    <property type="evidence" value="ECO:0007669"/>
    <property type="project" value="UniProtKB-UniRule"/>
</dbReference>
<dbReference type="GO" id="GO:0015937">
    <property type="term" value="P:coenzyme A biosynthetic process"/>
    <property type="evidence" value="ECO:0007669"/>
    <property type="project" value="UniProtKB-UniRule"/>
</dbReference>
<dbReference type="CDD" id="cd02163">
    <property type="entry name" value="PPAT"/>
    <property type="match status" value="1"/>
</dbReference>
<dbReference type="Gene3D" id="3.40.50.620">
    <property type="entry name" value="HUPs"/>
    <property type="match status" value="1"/>
</dbReference>
<dbReference type="HAMAP" id="MF_00151">
    <property type="entry name" value="PPAT_bact"/>
    <property type="match status" value="1"/>
</dbReference>
<dbReference type="InterPro" id="IPR004821">
    <property type="entry name" value="Cyt_trans-like"/>
</dbReference>
<dbReference type="InterPro" id="IPR001980">
    <property type="entry name" value="PPAT"/>
</dbReference>
<dbReference type="InterPro" id="IPR014729">
    <property type="entry name" value="Rossmann-like_a/b/a_fold"/>
</dbReference>
<dbReference type="NCBIfam" id="TIGR01510">
    <property type="entry name" value="coaD_prev_kdtB"/>
    <property type="match status" value="1"/>
</dbReference>
<dbReference type="NCBIfam" id="TIGR00125">
    <property type="entry name" value="cyt_tran_rel"/>
    <property type="match status" value="1"/>
</dbReference>
<dbReference type="PANTHER" id="PTHR21342">
    <property type="entry name" value="PHOSPHOPANTETHEINE ADENYLYLTRANSFERASE"/>
    <property type="match status" value="1"/>
</dbReference>
<dbReference type="PANTHER" id="PTHR21342:SF1">
    <property type="entry name" value="PHOSPHOPANTETHEINE ADENYLYLTRANSFERASE"/>
    <property type="match status" value="1"/>
</dbReference>
<dbReference type="Pfam" id="PF01467">
    <property type="entry name" value="CTP_transf_like"/>
    <property type="match status" value="1"/>
</dbReference>
<dbReference type="PRINTS" id="PR01020">
    <property type="entry name" value="LPSBIOSNTHSS"/>
</dbReference>
<dbReference type="SUPFAM" id="SSF52374">
    <property type="entry name" value="Nucleotidylyl transferase"/>
    <property type="match status" value="1"/>
</dbReference>
<gene>
    <name evidence="1" type="primary">coaD</name>
    <name type="ordered locus">DET0190</name>
</gene>
<comment type="function">
    <text evidence="1">Reversibly transfers an adenylyl group from ATP to 4'-phosphopantetheine, yielding dephospho-CoA (dPCoA) and pyrophosphate.</text>
</comment>
<comment type="catalytic activity">
    <reaction evidence="1">
        <text>(R)-4'-phosphopantetheine + ATP + H(+) = 3'-dephospho-CoA + diphosphate</text>
        <dbReference type="Rhea" id="RHEA:19801"/>
        <dbReference type="ChEBI" id="CHEBI:15378"/>
        <dbReference type="ChEBI" id="CHEBI:30616"/>
        <dbReference type="ChEBI" id="CHEBI:33019"/>
        <dbReference type="ChEBI" id="CHEBI:57328"/>
        <dbReference type="ChEBI" id="CHEBI:61723"/>
        <dbReference type="EC" id="2.7.7.3"/>
    </reaction>
</comment>
<comment type="cofactor">
    <cofactor evidence="1">
        <name>Mg(2+)</name>
        <dbReference type="ChEBI" id="CHEBI:18420"/>
    </cofactor>
</comment>
<comment type="pathway">
    <text evidence="1">Cofactor biosynthesis; coenzyme A biosynthesis; CoA from (R)-pantothenate: step 4/5.</text>
</comment>
<comment type="subunit">
    <text evidence="1">Homohexamer.</text>
</comment>
<comment type="subcellular location">
    <subcellularLocation>
        <location evidence="1">Cytoplasm</location>
    </subcellularLocation>
</comment>
<comment type="similarity">
    <text evidence="1">Belongs to the bacterial CoaD family.</text>
</comment>
<protein>
    <recommendedName>
        <fullName evidence="1">Phosphopantetheine adenylyltransferase</fullName>
        <ecNumber evidence="1">2.7.7.3</ecNumber>
    </recommendedName>
    <alternativeName>
        <fullName evidence="1">Dephospho-CoA pyrophosphorylase</fullName>
    </alternativeName>
    <alternativeName>
        <fullName evidence="1">Pantetheine-phosphate adenylyltransferase</fullName>
        <shortName evidence="1">PPAT</shortName>
    </alternativeName>
</protein>
<name>COAD_DEHM1</name>
<organism>
    <name type="scientific">Dehalococcoides mccartyi (strain ATCC BAA-2266 / KCTC 15142 / 195)</name>
    <name type="common">Dehalococcoides ethenogenes (strain 195)</name>
    <dbReference type="NCBI Taxonomy" id="243164"/>
    <lineage>
        <taxon>Bacteria</taxon>
        <taxon>Bacillati</taxon>
        <taxon>Chloroflexota</taxon>
        <taxon>Dehalococcoidia</taxon>
        <taxon>Dehalococcoidales</taxon>
        <taxon>Dehalococcoidaceae</taxon>
        <taxon>Dehalococcoides</taxon>
    </lineage>
</organism>
<sequence length="159" mass="17565">MIAIYPGRFDPVTLGHLSVARRASGFCDRLIIAVFDNPAKPGLFTAAERVDLIKQSVKDLPNVEVHSFSGLMVNFARRMGVSLIIRGLRVGADFEREMEMYVMNRRLDEGIELCCLFSEPQYQYLSASLIKEVVMLGGDSSGLISEHVADALKNKLASA</sequence>
<evidence type="ECO:0000255" key="1">
    <source>
        <dbReference type="HAMAP-Rule" id="MF_00151"/>
    </source>
</evidence>